<keyword id="KW-0021">Allosteric enzyme</keyword>
<keyword id="KW-0225">Disease variant</keyword>
<keyword id="KW-0320">Glycogen biosynthesis</keyword>
<keyword id="KW-0322">Glycogen storage disease</keyword>
<keyword id="KW-0328">Glycosyltransferase</keyword>
<keyword id="KW-0597">Phosphoprotein</keyword>
<keyword id="KW-1267">Proteomics identification</keyword>
<keyword id="KW-1185">Reference proteome</keyword>
<keyword id="KW-0808">Transferase</keyword>
<evidence type="ECO:0000250" key="1">
    <source>
        <dbReference type="UniProtKB" id="P13807"/>
    </source>
</evidence>
<evidence type="ECO:0000250" key="2">
    <source>
        <dbReference type="UniProtKB" id="P13834"/>
    </source>
</evidence>
<evidence type="ECO:0000250" key="3">
    <source>
        <dbReference type="UniProtKB" id="P17625"/>
    </source>
</evidence>
<evidence type="ECO:0000250" key="4">
    <source>
        <dbReference type="UniProtKB" id="Q8VCB3"/>
    </source>
</evidence>
<evidence type="ECO:0000256" key="5">
    <source>
        <dbReference type="SAM" id="MobiDB-lite"/>
    </source>
</evidence>
<evidence type="ECO:0000269" key="6">
    <source>
    </source>
</evidence>
<evidence type="ECO:0000269" key="7">
    <source>
    </source>
</evidence>
<evidence type="ECO:0000269" key="8">
    <source>
    </source>
</evidence>
<evidence type="ECO:0000269" key="9">
    <source>
    </source>
</evidence>
<evidence type="ECO:0000269" key="10">
    <source ref="3"/>
</evidence>
<evidence type="ECO:0000303" key="11">
    <source>
    </source>
</evidence>
<evidence type="ECO:0000305" key="12"/>
<evidence type="ECO:0000305" key="13">
    <source>
    </source>
</evidence>
<evidence type="ECO:0000312" key="14">
    <source>
        <dbReference type="HGNC" id="HGNC:4707"/>
    </source>
</evidence>
<evidence type="ECO:0007744" key="15">
    <source>
    </source>
</evidence>
<reference key="1">
    <citation type="journal article" date="1994" name="Arch. Biochem. Biophys.">
        <title>Primary structure of human liver glycogen synthase deduced by cDNA cloning.</title>
        <authorList>
            <person name="Nuttall F.Q."/>
            <person name="Gannon M.C."/>
            <person name="Bai G."/>
            <person name="Lee E.Y."/>
        </authorList>
    </citation>
    <scope>NUCLEOTIDE SEQUENCE [MRNA]</scope>
    <scope>VARIANT VAL-363</scope>
    <source>
        <tissue>Liver</tissue>
    </source>
</reference>
<reference key="2">
    <citation type="journal article" date="1998" name="J. Clin. Invest.">
        <title>Mutations in the liver glycogen synthase gene in children with hypoglycemia due to glycogen storage disease type 0.</title>
        <authorList>
            <person name="Orho M."/>
            <person name="Bosshard N.U."/>
            <person name="Buist N.R.M."/>
            <person name="Gitzelmann R."/>
            <person name="Aynsley-Green A."/>
            <person name="Blumel P."/>
            <person name="Gannon M.C."/>
            <person name="Nuttall F.Q."/>
            <person name="Groop L.C."/>
        </authorList>
    </citation>
    <scope>NUCLEOTIDE SEQUENCE [GENOMIC DNA]</scope>
    <scope>FUNCTION</scope>
    <scope>CATALYTIC ACTIVITY</scope>
    <scope>PATHWAY</scope>
    <scope>VARIANTS GSD0 SER-39; PRO-339; VAL-363; ASP-446; GLN-479; PRO-483 AND ARG-491</scope>
    <scope>CHARACTERIZATION OF VARIANTS GSD0 SER-39; PRO-339; VAL-363; ASP-446; GLN-479; PRO-483 AND ARG-491</scope>
</reference>
<reference key="3">
    <citation type="submission" date="1994-07" db="EMBL/GenBank/DDBJ databases">
        <title>Human liver glycogen synthase cDNA.</title>
        <authorList>
            <person name="Nakabayashi H."/>
            <person name="Nakayama T."/>
        </authorList>
    </citation>
    <scope>NUCLEOTIDE SEQUENCE [MRNA]</scope>
    <scope>VARIANT VAL-363</scope>
    <source>
        <tissue>Liver</tissue>
    </source>
</reference>
<reference key="4">
    <citation type="journal article" date="2006" name="Nature">
        <title>The finished DNA sequence of human chromosome 12.</title>
        <authorList>
            <person name="Scherer S.E."/>
            <person name="Muzny D.M."/>
            <person name="Buhay C.J."/>
            <person name="Chen R."/>
            <person name="Cree A."/>
            <person name="Ding Y."/>
            <person name="Dugan-Rocha S."/>
            <person name="Gill R."/>
            <person name="Gunaratne P."/>
            <person name="Harris R.A."/>
            <person name="Hawes A.C."/>
            <person name="Hernandez J."/>
            <person name="Hodgson A.V."/>
            <person name="Hume J."/>
            <person name="Jackson A."/>
            <person name="Khan Z.M."/>
            <person name="Kovar-Smith C."/>
            <person name="Lewis L.R."/>
            <person name="Lozado R.J."/>
            <person name="Metzker M.L."/>
            <person name="Milosavljevic A."/>
            <person name="Miner G.R."/>
            <person name="Montgomery K.T."/>
            <person name="Morgan M.B."/>
            <person name="Nazareth L.V."/>
            <person name="Scott G."/>
            <person name="Sodergren E."/>
            <person name="Song X.-Z."/>
            <person name="Steffen D."/>
            <person name="Lovering R.C."/>
            <person name="Wheeler D.A."/>
            <person name="Worley K.C."/>
            <person name="Yuan Y."/>
            <person name="Zhang Z."/>
            <person name="Adams C.Q."/>
            <person name="Ansari-Lari M.A."/>
            <person name="Ayele M."/>
            <person name="Brown M.J."/>
            <person name="Chen G."/>
            <person name="Chen Z."/>
            <person name="Clerc-Blankenburg K.P."/>
            <person name="Davis C."/>
            <person name="Delgado O."/>
            <person name="Dinh H.H."/>
            <person name="Draper H."/>
            <person name="Gonzalez-Garay M.L."/>
            <person name="Havlak P."/>
            <person name="Jackson L.R."/>
            <person name="Jacob L.S."/>
            <person name="Kelly S.H."/>
            <person name="Li L."/>
            <person name="Li Z."/>
            <person name="Liu J."/>
            <person name="Liu W."/>
            <person name="Lu J."/>
            <person name="Maheshwari M."/>
            <person name="Nguyen B.-V."/>
            <person name="Okwuonu G.O."/>
            <person name="Pasternak S."/>
            <person name="Perez L.M."/>
            <person name="Plopper F.J.H."/>
            <person name="Santibanez J."/>
            <person name="Shen H."/>
            <person name="Tabor P.E."/>
            <person name="Verduzco D."/>
            <person name="Waldron L."/>
            <person name="Wang Q."/>
            <person name="Williams G.A."/>
            <person name="Zhang J."/>
            <person name="Zhou J."/>
            <person name="Allen C.C."/>
            <person name="Amin A.G."/>
            <person name="Anyalebechi V."/>
            <person name="Bailey M."/>
            <person name="Barbaria J.A."/>
            <person name="Bimage K.E."/>
            <person name="Bryant N.P."/>
            <person name="Burch P.E."/>
            <person name="Burkett C.E."/>
            <person name="Burrell K.L."/>
            <person name="Calderon E."/>
            <person name="Cardenas V."/>
            <person name="Carter K."/>
            <person name="Casias K."/>
            <person name="Cavazos I."/>
            <person name="Cavazos S.R."/>
            <person name="Ceasar H."/>
            <person name="Chacko J."/>
            <person name="Chan S.N."/>
            <person name="Chavez D."/>
            <person name="Christopoulos C."/>
            <person name="Chu J."/>
            <person name="Cockrell R."/>
            <person name="Cox C.D."/>
            <person name="Dang M."/>
            <person name="Dathorne S.R."/>
            <person name="David R."/>
            <person name="Davis C.M."/>
            <person name="Davy-Carroll L."/>
            <person name="Deshazo D.R."/>
            <person name="Donlin J.E."/>
            <person name="D'Souza L."/>
            <person name="Eaves K.A."/>
            <person name="Egan A."/>
            <person name="Emery-Cohen A.J."/>
            <person name="Escotto M."/>
            <person name="Flagg N."/>
            <person name="Forbes L.D."/>
            <person name="Gabisi A.M."/>
            <person name="Garza M."/>
            <person name="Hamilton C."/>
            <person name="Henderson N."/>
            <person name="Hernandez O."/>
            <person name="Hines S."/>
            <person name="Hogues M.E."/>
            <person name="Huang M."/>
            <person name="Idlebird D.G."/>
            <person name="Johnson R."/>
            <person name="Jolivet A."/>
            <person name="Jones S."/>
            <person name="Kagan R."/>
            <person name="King L.M."/>
            <person name="Leal B."/>
            <person name="Lebow H."/>
            <person name="Lee S."/>
            <person name="LeVan J.M."/>
            <person name="Lewis L.C."/>
            <person name="London P."/>
            <person name="Lorensuhewa L.M."/>
            <person name="Loulseged H."/>
            <person name="Lovett D.A."/>
            <person name="Lucier A."/>
            <person name="Lucier R.L."/>
            <person name="Ma J."/>
            <person name="Madu R.C."/>
            <person name="Mapua P."/>
            <person name="Martindale A.D."/>
            <person name="Martinez E."/>
            <person name="Massey E."/>
            <person name="Mawhiney S."/>
            <person name="Meador M.G."/>
            <person name="Mendez S."/>
            <person name="Mercado C."/>
            <person name="Mercado I.C."/>
            <person name="Merritt C.E."/>
            <person name="Miner Z.L."/>
            <person name="Minja E."/>
            <person name="Mitchell T."/>
            <person name="Mohabbat F."/>
            <person name="Mohabbat K."/>
            <person name="Montgomery B."/>
            <person name="Moore N."/>
            <person name="Morris S."/>
            <person name="Munidasa M."/>
            <person name="Ngo R.N."/>
            <person name="Nguyen N.B."/>
            <person name="Nickerson E."/>
            <person name="Nwaokelemeh O.O."/>
            <person name="Nwokenkwo S."/>
            <person name="Obregon M."/>
            <person name="Oguh M."/>
            <person name="Oragunye N."/>
            <person name="Oviedo R.J."/>
            <person name="Parish B.J."/>
            <person name="Parker D.N."/>
            <person name="Parrish J."/>
            <person name="Parks K.L."/>
            <person name="Paul H.A."/>
            <person name="Payton B.A."/>
            <person name="Perez A."/>
            <person name="Perrin W."/>
            <person name="Pickens A."/>
            <person name="Primus E.L."/>
            <person name="Pu L.-L."/>
            <person name="Puazo M."/>
            <person name="Quiles M.M."/>
            <person name="Quiroz J.B."/>
            <person name="Rabata D."/>
            <person name="Reeves K."/>
            <person name="Ruiz S.J."/>
            <person name="Shao H."/>
            <person name="Sisson I."/>
            <person name="Sonaike T."/>
            <person name="Sorelle R.P."/>
            <person name="Sutton A.E."/>
            <person name="Svatek A.F."/>
            <person name="Svetz L.A."/>
            <person name="Tamerisa K.S."/>
            <person name="Taylor T.R."/>
            <person name="Teague B."/>
            <person name="Thomas N."/>
            <person name="Thorn R.D."/>
            <person name="Trejos Z.Y."/>
            <person name="Trevino B.K."/>
            <person name="Ukegbu O.N."/>
            <person name="Urban J.B."/>
            <person name="Vasquez L.I."/>
            <person name="Vera V.A."/>
            <person name="Villasana D.M."/>
            <person name="Wang L."/>
            <person name="Ward-Moore S."/>
            <person name="Warren J.T."/>
            <person name="Wei X."/>
            <person name="White F."/>
            <person name="Williamson A.L."/>
            <person name="Wleczyk R."/>
            <person name="Wooden H.S."/>
            <person name="Wooden S.H."/>
            <person name="Yen J."/>
            <person name="Yoon L."/>
            <person name="Yoon V."/>
            <person name="Zorrilla S.E."/>
            <person name="Nelson D."/>
            <person name="Kucherlapati R."/>
            <person name="Weinstock G."/>
            <person name="Gibbs R.A."/>
        </authorList>
    </citation>
    <scope>NUCLEOTIDE SEQUENCE [LARGE SCALE GENOMIC DNA]</scope>
</reference>
<reference key="5">
    <citation type="journal article" date="2004" name="Genome Res.">
        <title>The status, quality, and expansion of the NIH full-length cDNA project: the Mammalian Gene Collection (MGC).</title>
        <authorList>
            <consortium name="The MGC Project Team"/>
        </authorList>
    </citation>
    <scope>NUCLEOTIDE SEQUENCE [LARGE SCALE MRNA]</scope>
    <scope>VARIANT VAL-363</scope>
</reference>
<reference key="6">
    <citation type="journal article" date="1992" name="Arch. Biochem. Biophys.">
        <title>Comparative characterization of human and rat liver glycogen synthase.</title>
        <authorList>
            <person name="Westphal S.A."/>
            <person name="Nuttall F.Q."/>
        </authorList>
    </citation>
    <scope>FUNCTION</scope>
    <scope>CATALYTIC ACTIVITY</scope>
    <scope>ACTIVITY REGULATION</scope>
    <scope>BIOPHYSICOCHEMICAL PROPERTIES</scope>
    <scope>PATHWAY</scope>
    <scope>TISSUE SPECIFICITY</scope>
    <source>
        <tissue>Liver</tissue>
    </source>
</reference>
<reference key="7">
    <citation type="journal article" date="2014" name="J. Proteomics">
        <title>An enzyme assisted RP-RPLC approach for in-depth analysis of human liver phosphoproteome.</title>
        <authorList>
            <person name="Bian Y."/>
            <person name="Song C."/>
            <person name="Cheng K."/>
            <person name="Dong M."/>
            <person name="Wang F."/>
            <person name="Huang J."/>
            <person name="Sun D."/>
            <person name="Wang L."/>
            <person name="Ye M."/>
            <person name="Zou H."/>
        </authorList>
    </citation>
    <scope>PHOSPHORYLATION [LARGE SCALE ANALYSIS] AT SER-627 AND SER-683</scope>
    <scope>IDENTIFICATION BY MASS SPECTROMETRY [LARGE SCALE ANALYSIS]</scope>
    <source>
        <tissue>Liver</tissue>
    </source>
</reference>
<feature type="chain" id="PRO_0000194768" description="Glycogen [starch] synthase, liver">
    <location>
        <begin position="1"/>
        <end position="703"/>
    </location>
</feature>
<feature type="region of interest" description="Disordered" evidence="5">
    <location>
        <begin position="628"/>
        <end position="703"/>
    </location>
</feature>
<feature type="compositionally biased region" description="Low complexity" evidence="5">
    <location>
        <begin position="647"/>
        <end position="657"/>
    </location>
</feature>
<feature type="compositionally biased region" description="Acidic residues" evidence="5">
    <location>
        <begin position="658"/>
        <end position="674"/>
    </location>
</feature>
<feature type="binding site" evidence="1">
    <location>
        <position position="40"/>
    </location>
    <ligand>
        <name>UDP</name>
        <dbReference type="ChEBI" id="CHEBI:58223"/>
    </ligand>
</feature>
<feature type="binding site" evidence="1">
    <location>
        <position position="205"/>
    </location>
    <ligand>
        <name>UDP-alpha-D-glucose</name>
        <dbReference type="ChEBI" id="CHEBI:58885"/>
    </ligand>
</feature>
<feature type="binding site" evidence="1">
    <location>
        <position position="211"/>
    </location>
    <ligand>
        <name>UDP-alpha-D-glucose</name>
        <dbReference type="ChEBI" id="CHEBI:58885"/>
    </ligand>
</feature>
<feature type="binding site" description="in other chain" evidence="1">
    <location>
        <position position="291"/>
    </location>
    <ligand>
        <name>alpha-D-glucose 6-phosphate</name>
        <dbReference type="ChEBI" id="CHEBI:58225"/>
        <note>allosteric activator; ligand shared between two neighboring subunits</note>
    </ligand>
</feature>
<feature type="binding site" description="in other chain" evidence="1">
    <location>
        <position position="292"/>
    </location>
    <ligand>
        <name>alpha-D-glucose 6-phosphate</name>
        <dbReference type="ChEBI" id="CHEBI:58225"/>
        <note>allosteric activator; ligand shared between two neighboring subunits</note>
    </ligand>
</feature>
<feature type="binding site" evidence="1">
    <location>
        <position position="294"/>
    </location>
    <ligand>
        <name>alpha-D-glucose 6-phosphate</name>
        <dbReference type="ChEBI" id="CHEBI:58225"/>
        <note>allosteric activator; ligand shared between two neighboring subunits</note>
    </ligand>
</feature>
<feature type="binding site" evidence="1">
    <location>
        <position position="297"/>
    </location>
    <ligand>
        <name>alpha-D-glucose 6-phosphate</name>
        <dbReference type="ChEBI" id="CHEBI:58225"/>
        <note>allosteric activator; ligand shared between two neighboring subunits</note>
    </ligand>
</feature>
<feature type="binding site" evidence="1">
    <location>
        <position position="301"/>
    </location>
    <ligand>
        <name>alpha-D-glucose 6-phosphate</name>
        <dbReference type="ChEBI" id="CHEBI:58225"/>
        <note>allosteric activator; ligand shared between two neighboring subunits</note>
    </ligand>
</feature>
<feature type="binding site" evidence="1">
    <location>
        <position position="331"/>
    </location>
    <ligand>
        <name>UDP</name>
        <dbReference type="ChEBI" id="CHEBI:58223"/>
    </ligand>
</feature>
<feature type="binding site" evidence="1">
    <location>
        <position position="331"/>
    </location>
    <ligand>
        <name>UDP-alpha-D-glucose</name>
        <dbReference type="ChEBI" id="CHEBI:58885"/>
    </ligand>
</feature>
<feature type="binding site" evidence="1">
    <location>
        <position position="501"/>
    </location>
    <ligand>
        <name>alpha-D-glucose 6-phosphate</name>
        <dbReference type="ChEBI" id="CHEBI:58225"/>
        <note>allosteric activator; ligand shared between two neighboring subunits</note>
    </ligand>
</feature>
<feature type="binding site" evidence="1">
    <location>
        <position position="510"/>
    </location>
    <ligand>
        <name>UDP-alpha-D-glucose</name>
        <dbReference type="ChEBI" id="CHEBI:58885"/>
    </ligand>
</feature>
<feature type="binding site" evidence="1">
    <location>
        <position position="512"/>
    </location>
    <ligand>
        <name>UDP-alpha-D-glucose</name>
        <dbReference type="ChEBI" id="CHEBI:58885"/>
    </ligand>
</feature>
<feature type="binding site" evidence="1">
    <location>
        <position position="513"/>
    </location>
    <ligand>
        <name>UDP-alpha-D-glucose</name>
        <dbReference type="ChEBI" id="CHEBI:58885"/>
    </ligand>
</feature>
<feature type="binding site" evidence="1">
    <location>
        <position position="515"/>
    </location>
    <ligand>
        <name>UDP</name>
        <dbReference type="ChEBI" id="CHEBI:58223"/>
    </ligand>
</feature>
<feature type="binding site" evidence="1">
    <location>
        <position position="582"/>
    </location>
    <ligand>
        <name>alpha-D-glucose 6-phosphate</name>
        <dbReference type="ChEBI" id="CHEBI:58225"/>
        <note>allosteric activator; ligand shared between two neighboring subunits</note>
    </ligand>
</feature>
<feature type="binding site" evidence="1">
    <location>
        <position position="586"/>
    </location>
    <ligand>
        <name>alpha-D-glucose 6-phosphate</name>
        <dbReference type="ChEBI" id="CHEBI:58225"/>
        <note>allosteric activator; ligand shared between two neighboring subunits</note>
    </ligand>
</feature>
<feature type="modified residue" description="Phosphoserine; by PKA" evidence="3">
    <location>
        <position position="8"/>
    </location>
</feature>
<feature type="modified residue" description="Phosphoserine" evidence="4">
    <location>
        <position position="11"/>
    </location>
</feature>
<feature type="modified residue" description="Phosphoserine" evidence="15">
    <location>
        <position position="627"/>
    </location>
</feature>
<feature type="modified residue" description="Phosphoserine; by GSK3-alpha and GSK3-beta" evidence="2">
    <location>
        <position position="641"/>
    </location>
</feature>
<feature type="modified residue" description="Phosphoserine; by GSK3-alpha and GSK3-beta" evidence="2">
    <location>
        <position position="645"/>
    </location>
</feature>
<feature type="modified residue" description="Phosphoserine; by GSK3-alpha and GSK3-beta" evidence="2">
    <location>
        <position position="649"/>
    </location>
</feature>
<feature type="modified residue" description="Phosphoserine; by GSK3-alpha and GSK3-beta" evidence="2">
    <location>
        <position position="653"/>
    </location>
</feature>
<feature type="modified residue" description="Phosphoserine; by CK2" evidence="2">
    <location>
        <position position="657"/>
    </location>
</feature>
<feature type="modified residue" description="Phosphoserine" evidence="15">
    <location>
        <position position="683"/>
    </location>
</feature>
<feature type="sequence variant" id="VAR_007860" description="In GSD0; loss of glycogen (starch) synthase activity; dbSNP:rs121918423." evidence="9">
    <original>N</original>
    <variation>S</variation>
    <location>
        <position position="39"/>
    </location>
</feature>
<feature type="sequence variant" id="VAR_055885" description="In dbSNP:rs16924038.">
    <original>A</original>
    <variation>T</variation>
    <location>
        <position position="193"/>
    </location>
</feature>
<feature type="sequence variant" id="VAR_007861" description="In GSD0; loss of glycogen (starch) synthase activity; dbSNP:rs121918421." evidence="9">
    <original>A</original>
    <variation>P</variation>
    <location>
        <position position="339"/>
    </location>
</feature>
<feature type="sequence variant" id="VAR_058848" description="In dbSNP:rs2306180." evidence="6 8 9 10">
    <original>M</original>
    <variation>V</variation>
    <location>
        <position position="363"/>
    </location>
</feature>
<feature type="sequence variant" id="VAR_055886" description="In dbSNP:rs16924002.">
    <original>D</original>
    <variation>E</variation>
    <location>
        <position position="415"/>
    </location>
</feature>
<feature type="sequence variant" id="VAR_007862" description="In GSD0; loss of glycogen (starch) synthase activity; dbSNP:rs121918425." evidence="9">
    <original>H</original>
    <variation>D</variation>
    <location>
        <position position="446"/>
    </location>
</feature>
<feature type="sequence variant" id="VAR_007863" description="In GSD0; loss of glycogen (starch) synthase activity; dbSNP:rs121918420." evidence="9">
    <original>P</original>
    <variation>Q</variation>
    <location>
        <position position="479"/>
    </location>
</feature>
<feature type="sequence variant" id="VAR_007864" description="In GSD0; loss of glycogen (starch) synthase activity; dbSNP:rs121918424." evidence="9">
    <original>S</original>
    <variation>P</variation>
    <location>
        <position position="483"/>
    </location>
</feature>
<feature type="sequence variant" id="VAR_007865" description="In GSD0; loss of glycogen (starch) synthase activity; dbSNP:rs121918422." evidence="9">
    <original>M</original>
    <variation>R</variation>
    <location>
        <position position="491"/>
    </location>
</feature>
<feature type="sequence conflict" description="In Ref. 3; BAA06154." evidence="12" ref="3">
    <original>K</original>
    <variation>M</variation>
    <location>
        <position position="97"/>
    </location>
</feature>
<feature type="sequence conflict" description="In Ref. 3; BAA06154." evidence="12" ref="3">
    <original>Q</original>
    <variation>R</variation>
    <location>
        <position position="178"/>
    </location>
</feature>
<feature type="sequence conflict" description="In Ref. 3; BAA06154." evidence="12" ref="3">
    <original>I</original>
    <variation>V</variation>
    <location>
        <position position="186"/>
    </location>
</feature>
<feature type="sequence conflict" description="In Ref. 3; BAA06154." evidence="12" ref="3">
    <original>SN</original>
    <variation>FKT</variation>
    <location>
        <begin position="335"/>
        <end position="336"/>
    </location>
</feature>
<feature type="sequence conflict" description="In Ref. 3; BAA06154." evidence="12" ref="3">
    <original>E</original>
    <variation>D</variation>
    <location>
        <position position="344"/>
    </location>
</feature>
<feature type="sequence conflict" description="In Ref. 3; BAA06154." evidence="12" ref="3">
    <original>P</original>
    <variation>A</variation>
    <location>
        <position position="441"/>
    </location>
</feature>
<feature type="sequence conflict" description="In Ref. 3; BAA06154." evidence="12" ref="3">
    <original>KQ</original>
    <variation>NM</variation>
    <location>
        <begin position="576"/>
        <end position="577"/>
    </location>
</feature>
<feature type="sequence conflict" description="In Ref. 3; BAA06154." evidence="12" ref="3">
    <original>I</original>
    <variation>F</variation>
    <location>
        <position position="583"/>
    </location>
</feature>
<sequence>MLRGRSLSVTSLGGLPQWEVEELPVEELLLFEVAWEVTNKVGGIYTVIQTKAKTTADEWGENYFLIGPYFEHNMKTQVEQCEPVNDAVRRAVDAMNKHGCQVHFGRWLIEGSPYVVLFDIGYSAWNLDRWKGDLWEACSVGIPYHDREANDMLIFGSLTAWFLKEVTDHADGKYVVAQFHEWQAGIGLILSRARKLPIATIFTTHATLLGRYLCAANIDFYNHLDKFNIDKEAGERQIYHRYCMERASVHCAHVFTTVSEITAIEAEHMLKRKPDVVTPNGLNVKKFSAVHEFQNLHAMYKARIQDFVRGHFYGHLDFDLEKTLFLFIAGRYEFSNKGADIFLESLSRLNFLLRMHKSDITVMVFFIMPAKTNNFNVETLKGQAVRKQLWDVAHSVKEKFGKKLYDALLRGEIPDLNDILDRDDLTIMKRAIFSTQRQSLPPVTTHNMIDDSTDPILSTIRRIGLFNNRTDRVKVILHPEFLSSTSPLLPMDYEEFVRGCHLGVFPSYYEPWGYTPAECTVMGIPSVTTNLSGFGCFMQEHVADPTAYGIYIVDRRFRSPDDSCNQLTKFLYGFCKQSRRQRIIQRNRTERLSDLLDWRYLGRYYQHARHLTLSRAFPDKFHVELTSPPTTEGFKYPRPSSVPPSPSGSQASSPQSSDVEDEVEDERYDEEEEAERDRLNIKSPFSLSHVPHGKKKLHGEYKN</sequence>
<name>GYS2_HUMAN</name>
<organism>
    <name type="scientific">Homo sapiens</name>
    <name type="common">Human</name>
    <dbReference type="NCBI Taxonomy" id="9606"/>
    <lineage>
        <taxon>Eukaryota</taxon>
        <taxon>Metazoa</taxon>
        <taxon>Chordata</taxon>
        <taxon>Craniata</taxon>
        <taxon>Vertebrata</taxon>
        <taxon>Euteleostomi</taxon>
        <taxon>Mammalia</taxon>
        <taxon>Eutheria</taxon>
        <taxon>Euarchontoglires</taxon>
        <taxon>Primates</taxon>
        <taxon>Haplorrhini</taxon>
        <taxon>Catarrhini</taxon>
        <taxon>Hominidae</taxon>
        <taxon>Homo</taxon>
    </lineage>
</organism>
<dbReference type="EC" id="2.4.1.11" evidence="7 9"/>
<dbReference type="EMBL" id="S70004">
    <property type="protein sequence ID" value="AAB30886.1"/>
    <property type="molecule type" value="mRNA"/>
</dbReference>
<dbReference type="EMBL" id="AJ003087">
    <property type="protein sequence ID" value="CAA05859.1"/>
    <property type="molecule type" value="Genomic_DNA"/>
</dbReference>
<dbReference type="EMBL" id="AJ003088">
    <property type="protein sequence ID" value="CAA05859.1"/>
    <property type="status" value="JOINED"/>
    <property type="molecule type" value="Genomic_DNA"/>
</dbReference>
<dbReference type="EMBL" id="AJ003089">
    <property type="protein sequence ID" value="CAA05859.1"/>
    <property type="status" value="JOINED"/>
    <property type="molecule type" value="Genomic_DNA"/>
</dbReference>
<dbReference type="EMBL" id="AJ003090">
    <property type="protein sequence ID" value="CAA05859.1"/>
    <property type="status" value="JOINED"/>
    <property type="molecule type" value="Genomic_DNA"/>
</dbReference>
<dbReference type="EMBL" id="AJ003091">
    <property type="protein sequence ID" value="CAA05859.1"/>
    <property type="status" value="JOINED"/>
    <property type="molecule type" value="Genomic_DNA"/>
</dbReference>
<dbReference type="EMBL" id="AJ003092">
    <property type="protein sequence ID" value="CAA05859.1"/>
    <property type="status" value="JOINED"/>
    <property type="molecule type" value="Genomic_DNA"/>
</dbReference>
<dbReference type="EMBL" id="AJ003093">
    <property type="protein sequence ID" value="CAA05859.1"/>
    <property type="status" value="JOINED"/>
    <property type="molecule type" value="Genomic_DNA"/>
</dbReference>
<dbReference type="EMBL" id="AJ003094">
    <property type="protein sequence ID" value="CAA05859.1"/>
    <property type="status" value="JOINED"/>
    <property type="molecule type" value="Genomic_DNA"/>
</dbReference>
<dbReference type="EMBL" id="AJ003095">
    <property type="protein sequence ID" value="CAA05859.1"/>
    <property type="status" value="JOINED"/>
    <property type="molecule type" value="Genomic_DNA"/>
</dbReference>
<dbReference type="EMBL" id="AJ003096">
    <property type="protein sequence ID" value="CAA05859.1"/>
    <property type="status" value="JOINED"/>
    <property type="molecule type" value="Genomic_DNA"/>
</dbReference>
<dbReference type="EMBL" id="AJ003097">
    <property type="protein sequence ID" value="CAA05859.1"/>
    <property type="status" value="JOINED"/>
    <property type="molecule type" value="Genomic_DNA"/>
</dbReference>
<dbReference type="EMBL" id="AJ003098">
    <property type="protein sequence ID" value="CAA05859.1"/>
    <property type="status" value="JOINED"/>
    <property type="molecule type" value="Genomic_DNA"/>
</dbReference>
<dbReference type="EMBL" id="AJ003099">
    <property type="protein sequence ID" value="CAA05859.1"/>
    <property type="status" value="JOINED"/>
    <property type="molecule type" value="Genomic_DNA"/>
</dbReference>
<dbReference type="EMBL" id="AJ003100">
    <property type="protein sequence ID" value="CAA05859.1"/>
    <property type="status" value="JOINED"/>
    <property type="molecule type" value="Genomic_DNA"/>
</dbReference>
<dbReference type="EMBL" id="AJ003101">
    <property type="protein sequence ID" value="CAA05859.1"/>
    <property type="status" value="JOINED"/>
    <property type="molecule type" value="Genomic_DNA"/>
</dbReference>
<dbReference type="EMBL" id="AJ003102">
    <property type="protein sequence ID" value="CAA05859.1"/>
    <property type="status" value="JOINED"/>
    <property type="molecule type" value="Genomic_DNA"/>
</dbReference>
<dbReference type="EMBL" id="D29685">
    <property type="protein sequence ID" value="BAA06154.1"/>
    <property type="molecule type" value="mRNA"/>
</dbReference>
<dbReference type="EMBL" id="AC006559">
    <property type="status" value="NOT_ANNOTATED_CDS"/>
    <property type="molecule type" value="Genomic_DNA"/>
</dbReference>
<dbReference type="EMBL" id="AC010197">
    <property type="status" value="NOT_ANNOTATED_CDS"/>
    <property type="molecule type" value="Genomic_DNA"/>
</dbReference>
<dbReference type="EMBL" id="AC022072">
    <property type="status" value="NOT_ANNOTATED_CDS"/>
    <property type="molecule type" value="Genomic_DNA"/>
</dbReference>
<dbReference type="EMBL" id="BC126310">
    <property type="protein sequence ID" value="AAI26311.1"/>
    <property type="molecule type" value="mRNA"/>
</dbReference>
<dbReference type="EMBL" id="BC126312">
    <property type="protein sequence ID" value="AAI26313.1"/>
    <property type="molecule type" value="mRNA"/>
</dbReference>
<dbReference type="CCDS" id="CCDS8690.1"/>
<dbReference type="PIR" id="S45686">
    <property type="entry name" value="S45686"/>
</dbReference>
<dbReference type="RefSeq" id="NP_068776.2">
    <property type="nucleotide sequence ID" value="NM_021957.4"/>
</dbReference>
<dbReference type="RefSeq" id="XP_024304728.1">
    <property type="nucleotide sequence ID" value="XM_024448960.2"/>
</dbReference>
<dbReference type="SMR" id="P54840"/>
<dbReference type="BioGRID" id="109253">
    <property type="interactions" value="10"/>
</dbReference>
<dbReference type="FunCoup" id="P54840">
    <property type="interactions" value="949"/>
</dbReference>
<dbReference type="IntAct" id="P54840">
    <property type="interactions" value="7"/>
</dbReference>
<dbReference type="MINT" id="P54840"/>
<dbReference type="STRING" id="9606.ENSP00000261195"/>
<dbReference type="BindingDB" id="P54840"/>
<dbReference type="ChEMBL" id="CHEMBL4523243"/>
<dbReference type="DrugCentral" id="P54840"/>
<dbReference type="CAZy" id="GT3">
    <property type="family name" value="Glycosyltransferase Family 3"/>
</dbReference>
<dbReference type="GlyGen" id="P54840">
    <property type="glycosylation" value="1 site, 1 O-linked glycan (1 site)"/>
</dbReference>
<dbReference type="iPTMnet" id="P54840"/>
<dbReference type="PhosphoSitePlus" id="P54840"/>
<dbReference type="BioMuta" id="GYS2"/>
<dbReference type="DMDM" id="288558811"/>
<dbReference type="jPOST" id="P54840"/>
<dbReference type="MassIVE" id="P54840"/>
<dbReference type="PaxDb" id="9606-ENSP00000261195"/>
<dbReference type="PeptideAtlas" id="P54840"/>
<dbReference type="ProteomicsDB" id="56737"/>
<dbReference type="Antibodypedia" id="24071">
    <property type="antibodies" value="103 antibodies from 25 providers"/>
</dbReference>
<dbReference type="DNASU" id="2998"/>
<dbReference type="Ensembl" id="ENST00000261195.3">
    <property type="protein sequence ID" value="ENSP00000261195.2"/>
    <property type="gene ID" value="ENSG00000111713.3"/>
</dbReference>
<dbReference type="GeneID" id="2998"/>
<dbReference type="KEGG" id="hsa:2998"/>
<dbReference type="MANE-Select" id="ENST00000261195.3">
    <property type="protein sequence ID" value="ENSP00000261195.2"/>
    <property type="RefSeq nucleotide sequence ID" value="NM_021957.4"/>
    <property type="RefSeq protein sequence ID" value="NP_068776.2"/>
</dbReference>
<dbReference type="UCSC" id="uc001rfb.3">
    <property type="organism name" value="human"/>
</dbReference>
<dbReference type="AGR" id="HGNC:4707"/>
<dbReference type="CTD" id="2998"/>
<dbReference type="DisGeNET" id="2998"/>
<dbReference type="GeneCards" id="GYS2"/>
<dbReference type="HGNC" id="HGNC:4707">
    <property type="gene designation" value="GYS2"/>
</dbReference>
<dbReference type="HPA" id="ENSG00000111713">
    <property type="expression patterns" value="Tissue enriched (liver)"/>
</dbReference>
<dbReference type="MalaCards" id="GYS2"/>
<dbReference type="MIM" id="138571">
    <property type="type" value="gene"/>
</dbReference>
<dbReference type="MIM" id="240600">
    <property type="type" value="phenotype"/>
</dbReference>
<dbReference type="neXtProt" id="NX_P54840"/>
<dbReference type="OpenTargets" id="ENSG00000111713"/>
<dbReference type="Orphanet" id="2089">
    <property type="disease" value="Glycogen storage disease due to hepatic glycogen synthase deficiency"/>
</dbReference>
<dbReference type="PharmGKB" id="PA29085"/>
<dbReference type="VEuPathDB" id="HostDB:ENSG00000111713"/>
<dbReference type="eggNOG" id="KOG3742">
    <property type="taxonomic scope" value="Eukaryota"/>
</dbReference>
<dbReference type="GeneTree" id="ENSGT00390000018612"/>
<dbReference type="HOGENOM" id="CLU_015910_1_0_1"/>
<dbReference type="InParanoid" id="P54840"/>
<dbReference type="OMA" id="RMHKSNV"/>
<dbReference type="OrthoDB" id="6335297at2759"/>
<dbReference type="PAN-GO" id="P54840">
    <property type="GO annotations" value="3 GO annotations based on evolutionary models"/>
</dbReference>
<dbReference type="PhylomeDB" id="P54840"/>
<dbReference type="TreeFam" id="TF300306"/>
<dbReference type="PathwayCommons" id="P54840"/>
<dbReference type="Reactome" id="R-HSA-3322077">
    <property type="pathway name" value="Glycogen synthesis"/>
</dbReference>
<dbReference type="Reactome" id="R-HSA-3858516">
    <property type="pathway name" value="Glycogen storage disease type 0 (liver GYS2)"/>
</dbReference>
<dbReference type="Reactome" id="R-HSA-3878781">
    <property type="pathway name" value="Glycogen storage disease type IV (GBE1)"/>
</dbReference>
<dbReference type="SignaLink" id="P54840"/>
<dbReference type="SIGNOR" id="P54840"/>
<dbReference type="UniPathway" id="UPA00164"/>
<dbReference type="BioGRID-ORCS" id="2998">
    <property type="hits" value="13 hits in 1147 CRISPR screens"/>
</dbReference>
<dbReference type="ChiTaRS" id="GYS2">
    <property type="organism name" value="human"/>
</dbReference>
<dbReference type="GenomeRNAi" id="2998"/>
<dbReference type="Pharos" id="P54840">
    <property type="development level" value="Tbio"/>
</dbReference>
<dbReference type="PRO" id="PR:P54840"/>
<dbReference type="Proteomes" id="UP000005640">
    <property type="component" value="Chromosome 12"/>
</dbReference>
<dbReference type="RNAct" id="P54840">
    <property type="molecule type" value="protein"/>
</dbReference>
<dbReference type="Bgee" id="ENSG00000111713">
    <property type="expression patterns" value="Expressed in right lobe of liver and 40 other cell types or tissues"/>
</dbReference>
<dbReference type="GO" id="GO:0005938">
    <property type="term" value="C:cell cortex"/>
    <property type="evidence" value="ECO:0000250"/>
    <property type="project" value="UniProtKB"/>
</dbReference>
<dbReference type="GO" id="GO:0030864">
    <property type="term" value="C:cortical actin cytoskeleton"/>
    <property type="evidence" value="ECO:0000250"/>
    <property type="project" value="UniProtKB"/>
</dbReference>
<dbReference type="GO" id="GO:0005737">
    <property type="term" value="C:cytoplasm"/>
    <property type="evidence" value="ECO:0000250"/>
    <property type="project" value="UniProtKB"/>
</dbReference>
<dbReference type="GO" id="GO:0005856">
    <property type="term" value="C:cytoskeleton"/>
    <property type="evidence" value="ECO:0000250"/>
    <property type="project" value="UniProtKB"/>
</dbReference>
<dbReference type="GO" id="GO:0005829">
    <property type="term" value="C:cytosol"/>
    <property type="evidence" value="ECO:0000250"/>
    <property type="project" value="UniProtKB"/>
</dbReference>
<dbReference type="GO" id="GO:0004373">
    <property type="term" value="F:alpha-1,4-glucan glucosyltransferase (UDP-glucose donor) activity"/>
    <property type="evidence" value="ECO:0000314"/>
    <property type="project" value="UniProtKB"/>
</dbReference>
<dbReference type="GO" id="GO:0061547">
    <property type="term" value="F:glycogen synthase activity, transferring glucose-1-phosphate"/>
    <property type="evidence" value="ECO:0000304"/>
    <property type="project" value="Reactome"/>
</dbReference>
<dbReference type="GO" id="GO:0005978">
    <property type="term" value="P:glycogen biosynthetic process"/>
    <property type="evidence" value="ECO:0000314"/>
    <property type="project" value="UniProtKB"/>
</dbReference>
<dbReference type="GO" id="GO:0009749">
    <property type="term" value="P:response to glucose"/>
    <property type="evidence" value="ECO:0000250"/>
    <property type="project" value="UniProtKB"/>
</dbReference>
<dbReference type="CDD" id="cd03793">
    <property type="entry name" value="GT3_GSY2-like"/>
    <property type="match status" value="1"/>
</dbReference>
<dbReference type="FunFam" id="3.40.50.2000:FF:000014">
    <property type="entry name" value="Glycogen [starch] synthase"/>
    <property type="match status" value="1"/>
</dbReference>
<dbReference type="FunFam" id="3.40.50.2000:FF:000028">
    <property type="entry name" value="Glycogen [starch] synthase"/>
    <property type="match status" value="1"/>
</dbReference>
<dbReference type="Gene3D" id="3.40.50.2000">
    <property type="entry name" value="Glycogen Phosphorylase B"/>
    <property type="match status" value="2"/>
</dbReference>
<dbReference type="InterPro" id="IPR008631">
    <property type="entry name" value="Glycogen_synth"/>
</dbReference>
<dbReference type="PANTHER" id="PTHR10176:SF1">
    <property type="entry name" value="GLYCOGEN [STARCH] SYNTHASE, LIVER"/>
    <property type="match status" value="1"/>
</dbReference>
<dbReference type="PANTHER" id="PTHR10176">
    <property type="entry name" value="GLYCOGEN SYNTHASE"/>
    <property type="match status" value="1"/>
</dbReference>
<dbReference type="Pfam" id="PF05693">
    <property type="entry name" value="Glycogen_syn"/>
    <property type="match status" value="1"/>
</dbReference>
<dbReference type="SUPFAM" id="SSF53756">
    <property type="entry name" value="UDP-Glycosyltransferase/glycogen phosphorylase"/>
    <property type="match status" value="2"/>
</dbReference>
<accession>P54840</accession>
<accession>A0AVD8</accession>
<gene>
    <name evidence="11 14" type="primary">GYS2</name>
</gene>
<proteinExistence type="evidence at protein level"/>
<comment type="function">
    <text evidence="7 9">Glycogen synthase participates in the glycogen biosynthetic process along with glycogenin and glycogen branching enzyme. Extends the primer composed of a few glucose units formed by glycogenin by adding new glucose units to it. In this context, glycogen synthase transfers the glycosyl residue from UDP-Glc to the non-reducing end of alpha-1,4-glucan.</text>
</comment>
<comment type="catalytic activity">
    <reaction evidence="7 9">
        <text>[(1-&gt;4)-alpha-D-glucosyl](n) + UDP-alpha-D-glucose = [(1-&gt;4)-alpha-D-glucosyl](n+1) + UDP + H(+)</text>
        <dbReference type="Rhea" id="RHEA:18549"/>
        <dbReference type="Rhea" id="RHEA-COMP:9584"/>
        <dbReference type="Rhea" id="RHEA-COMP:9587"/>
        <dbReference type="ChEBI" id="CHEBI:15378"/>
        <dbReference type="ChEBI" id="CHEBI:15444"/>
        <dbReference type="ChEBI" id="CHEBI:58223"/>
        <dbReference type="ChEBI" id="CHEBI:58885"/>
        <dbReference type="EC" id="2.4.1.11"/>
    </reaction>
    <physiologicalReaction direction="left-to-right" evidence="7 9">
        <dbReference type="Rhea" id="RHEA:18550"/>
    </physiologicalReaction>
</comment>
<comment type="activity regulation">
    <text evidence="7">Allosteric activation by glucose-6-phosphate (PubMed:1731614). Phosphorylation reduces the activity towards UDP-glucose (PubMed:1731614). When in the non-phosphorylated state, glycogen synthase does not require glucose-6-phosphate as an allosteric activator; when phosphorylated it does (PubMed:1731614).</text>
</comment>
<comment type="biophysicochemical properties">
    <kinetics>
        <KM evidence="7">1.5 mM for UDP-alpha-D-glucose (UDPG) (in the absence of glucose-6-phosphate) (poorly and non-phosphorylated state)</KM>
        <KM evidence="7">1.1 mM for UDP-alpha-D-glucose (UDPG) (in the presence of 50 uM of glucose-6-phosphate) (poorly or non-phosphorylated state)</KM>
        <KM evidence="7">0.2 mM for UDP-alpha-D-glucose (UDPG) (in the presence of 7.2 mM glucose-6-phosphate) (poorly or non-phosphorylated state)</KM>
        <KM evidence="7">33 mM for UDP-alpha-D-glucose (UDPG) (in the absence of glucose-6-phosphate) (most phosphorylated state)</KM>
        <KM evidence="7">20 mM for UDP-alpha-D-glucose (UDPG) (in the presence of 70 uM of glucose-6-phosphate) (most phosphorylated state)</KM>
        <KM evidence="7">8.9 mM for UDP-alpha-D-glucose (UDPG) (in the presence of 200 uM of glucose-6-phosphate) (most phosphorylated state)</KM>
        <KM evidence="7">0.3 mM for UDP-alpha-D-glucose (UDPG) (in the presence of 7.2 mM glucose-6-phosphate) (most phosphorylated state)</KM>
    </kinetics>
    <phDependence>
        <text evidence="7">Optimum pH is 7.5-8.5 (at 25 degrees Celsius) (non-phosphorylated state). Optimum pH is 8.5 (at 25 degrees Celsius) (most phosphorylated state).</text>
    </phDependence>
    <temperatureDependence>
        <text evidence="7">Optimum temperature is 30-40 degrees Celsius.</text>
    </temperatureDependence>
</comment>
<comment type="pathway">
    <text evidence="7 9">Glycan biosynthesis; glycogen biosynthesis.</text>
</comment>
<comment type="subunit">
    <text evidence="1 4">Part of the glycogen synthase (GS)-glycogenin complex, a heterooctamer composed of a tetramer of GS and 2 dimers of glycogenin, where each GS protomer binds to one glycogenin subunit (via glycogenin C-terminus); the GS tetramer may dissociate from glycogenin dimers to continue glycogen polymerization on its own (By similarity). May also form a heterooctamer complex with GYG1 (via GYG1 C-terminus) (By similarity).</text>
</comment>
<comment type="tissue specificity">
    <text evidence="7">Specifically expressed in liver (at protein level).</text>
</comment>
<comment type="PTM">
    <text evidence="1 2 4">Primed phosphorylation at Ser-657 (site 5) by CSNK2A1 and CSNK2A2 is required for inhibitory phosphorylation at Ser-641 (site 3a), Ser-645 (site 3b), Ser-649 (site 3c) and Ser-653 (site 4) by GSK3A an GSK3B. Dephosphorylation at Ser-641 and Ser-645 by PP1 activates the enzyme (By similarity). Phosphorylation at Ser-8 is not required for interaction with GYG1 (By similarity). Interaction with GYG1 does not regulate the phosphorylation at Ser-8 and Ser-641 (By similarity).</text>
</comment>
<comment type="disease" evidence="9">
    <disease id="DI-00517">
        <name>Glycogen storage disease 0</name>
        <acronym>GSD0</acronym>
        <description>A metabolic disorder characterized by fasting hypoglycemia presenting in infancy or early childhood, high blood ketones and low alanine and lactate concentrations. Although feeding relieves symptoms, it often results in postprandial hyperglycemia and hyperlactatemia.</description>
        <dbReference type="MIM" id="240600"/>
    </disease>
    <text>The disease is caused by variants affecting the gene represented in this entry.</text>
</comment>
<comment type="similarity">
    <text evidence="12">Belongs to the glycosyltransferase 3 family.</text>
</comment>
<protein>
    <recommendedName>
        <fullName evidence="13">Glycogen [starch] synthase, liver</fullName>
        <ecNumber evidence="7 9">2.4.1.11</ecNumber>
    </recommendedName>
    <alternativeName>
        <fullName evidence="14">Glycogen synthase 2</fullName>
    </alternativeName>
</protein>